<proteinExistence type="inferred from homology"/>
<accession>C6A2L5</accession>
<protein>
    <recommendedName>
        <fullName evidence="1">Hydroxymethylglutaryl-CoA synthase</fullName>
        <shortName evidence="1">HMG-CoA synthase</shortName>
        <shortName evidence="1">HMGCS</shortName>
        <ecNumber evidence="1">2.3.3.10</ecNumber>
    </recommendedName>
</protein>
<keyword id="KW-0012">Acyltransferase</keyword>
<keyword id="KW-0414">Isoprene biosynthesis</keyword>
<keyword id="KW-1185">Reference proteome</keyword>
<keyword id="KW-0808">Transferase</keyword>
<reference key="1">
    <citation type="journal article" date="2009" name="Appl. Environ. Microbiol.">
        <title>Metabolic versatility and indigenous origin of the archaeon Thermococcus sibiricus, isolated from a siberian oil reservoir, as revealed by genome analysis.</title>
        <authorList>
            <person name="Mardanov A.V."/>
            <person name="Ravin N.V."/>
            <person name="Svetlitchnyi V.A."/>
            <person name="Beletsky A.V."/>
            <person name="Miroshnichenko M.L."/>
            <person name="Bonch-Osmolovskaya E.A."/>
            <person name="Skryabin K.G."/>
        </authorList>
    </citation>
    <scope>NUCLEOTIDE SEQUENCE [LARGE SCALE GENOMIC DNA]</scope>
    <source>
        <strain>DSM 12597 / MM 739</strain>
    </source>
</reference>
<feature type="chain" id="PRO_1000215220" description="Hydroxymethylglutaryl-CoA synthase">
    <location>
        <begin position="1"/>
        <end position="350"/>
    </location>
</feature>
<feature type="active site" description="Proton donor/acceptor" evidence="1">
    <location>
        <position position="83"/>
    </location>
</feature>
<feature type="active site" description="Acyl-thioester intermediate" evidence="1">
    <location>
        <position position="115"/>
    </location>
</feature>
<feature type="active site" description="Proton donor/acceptor" evidence="1">
    <location>
        <position position="239"/>
    </location>
</feature>
<feature type="binding site" evidence="1">
    <location>
        <position position="115"/>
    </location>
    <ligand>
        <name>(3S)-3-hydroxy-3-methylglutaryl-CoA</name>
        <dbReference type="ChEBI" id="CHEBI:43074"/>
    </ligand>
</feature>
<feature type="binding site" evidence="1">
    <location>
        <position position="156"/>
    </location>
    <ligand>
        <name>(3S)-3-hydroxy-3-methylglutaryl-CoA</name>
        <dbReference type="ChEBI" id="CHEBI:43074"/>
    </ligand>
</feature>
<feature type="binding site" evidence="1">
    <location>
        <position position="204"/>
    </location>
    <ligand>
        <name>CoA</name>
        <dbReference type="ChEBI" id="CHEBI:57287"/>
        <note>ligand shared with acetoacetyl-CoA thiolase</note>
    </ligand>
</feature>
<feature type="binding site" evidence="1">
    <location>
        <position position="206"/>
    </location>
    <ligand>
        <name>(3S)-3-hydroxy-3-methylglutaryl-CoA</name>
        <dbReference type="ChEBI" id="CHEBI:43074"/>
    </ligand>
</feature>
<feature type="binding site" evidence="1">
    <location>
        <position position="239"/>
    </location>
    <ligand>
        <name>(3S)-3-hydroxy-3-methylglutaryl-CoA</name>
        <dbReference type="ChEBI" id="CHEBI:43074"/>
    </ligand>
</feature>
<feature type="binding site" evidence="1">
    <location>
        <position position="244"/>
    </location>
    <ligand>
        <name>CoA</name>
        <dbReference type="ChEBI" id="CHEBI:57287"/>
        <note>ligand shared with acetoacetyl-CoA thiolase</note>
    </ligand>
</feature>
<feature type="binding site" evidence="1">
    <location>
        <position position="271"/>
    </location>
    <ligand>
        <name>(3S)-3-hydroxy-3-methylglutaryl-CoA</name>
        <dbReference type="ChEBI" id="CHEBI:43074"/>
    </ligand>
</feature>
<feature type="binding site" evidence="1">
    <location>
        <position position="301"/>
    </location>
    <ligand>
        <name>(3S)-3-hydroxy-3-methylglutaryl-CoA</name>
        <dbReference type="ChEBI" id="CHEBI:43074"/>
    </ligand>
</feature>
<comment type="function">
    <text evidence="1">Catalyzes the condensation of acetyl-CoA with acetoacetyl-CoA to form 3-hydroxy-3-methylglutaryl-CoA (HMG-CoA). Functions in the mevalonate (MVA) pathway leading to isopentenyl diphosphate (IPP), a key precursor for the biosynthesis of isoprenoid compounds that are building blocks of archaeal membrane lipids.</text>
</comment>
<comment type="catalytic activity">
    <reaction evidence="1">
        <text>acetoacetyl-CoA + acetyl-CoA + H2O = (3S)-3-hydroxy-3-methylglutaryl-CoA + CoA + H(+)</text>
        <dbReference type="Rhea" id="RHEA:10188"/>
        <dbReference type="ChEBI" id="CHEBI:15377"/>
        <dbReference type="ChEBI" id="CHEBI:15378"/>
        <dbReference type="ChEBI" id="CHEBI:43074"/>
        <dbReference type="ChEBI" id="CHEBI:57286"/>
        <dbReference type="ChEBI" id="CHEBI:57287"/>
        <dbReference type="ChEBI" id="CHEBI:57288"/>
        <dbReference type="EC" id="2.3.3.10"/>
    </reaction>
    <physiologicalReaction direction="left-to-right" evidence="1">
        <dbReference type="Rhea" id="RHEA:10189"/>
    </physiologicalReaction>
</comment>
<comment type="pathway">
    <text evidence="1">Metabolic intermediate biosynthesis; (R)-mevalonate biosynthesis; (R)-mevalonate from acetyl-CoA: step 2/3.</text>
</comment>
<comment type="subunit">
    <text evidence="1">Interacts with acetoacetyl-CoA thiolase that catalyzes the precedent step in the pathway and with a DUF35 protein. The acetoacetyl-CoA thiolase/HMG-CoA synthase complex channels the intermediate via a fused CoA-binding site, which allows for efficient coupling of the endergonic thiolase reaction with the exergonic HMGCS reaction.</text>
</comment>
<comment type="similarity">
    <text evidence="1">Belongs to the thiolase-like superfamily. Archaeal HMG-CoA synthase family.</text>
</comment>
<dbReference type="EC" id="2.3.3.10" evidence="1"/>
<dbReference type="EMBL" id="CP001463">
    <property type="protein sequence ID" value="ACS89860.1"/>
    <property type="molecule type" value="Genomic_DNA"/>
</dbReference>
<dbReference type="RefSeq" id="WP_015849080.1">
    <property type="nucleotide sequence ID" value="NC_012883.1"/>
</dbReference>
<dbReference type="SMR" id="C6A2L5"/>
<dbReference type="STRING" id="604354.TSIB_0799"/>
<dbReference type="GeneID" id="8095789"/>
<dbReference type="KEGG" id="tsi:TSIB_0799"/>
<dbReference type="eggNOG" id="arCOG01767">
    <property type="taxonomic scope" value="Archaea"/>
</dbReference>
<dbReference type="HOGENOM" id="CLU_039592_7_0_2"/>
<dbReference type="OrthoDB" id="5812at2157"/>
<dbReference type="UniPathway" id="UPA00058">
    <property type="reaction ID" value="UER00102"/>
</dbReference>
<dbReference type="Proteomes" id="UP000009079">
    <property type="component" value="Chromosome"/>
</dbReference>
<dbReference type="GO" id="GO:0003985">
    <property type="term" value="F:acetyl-CoA C-acetyltransferase activity"/>
    <property type="evidence" value="ECO:0007669"/>
    <property type="project" value="UniProtKB-UniRule"/>
</dbReference>
<dbReference type="GO" id="GO:0004421">
    <property type="term" value="F:hydroxymethylglutaryl-CoA synthase activity"/>
    <property type="evidence" value="ECO:0007669"/>
    <property type="project" value="InterPro"/>
</dbReference>
<dbReference type="GO" id="GO:0010142">
    <property type="term" value="P:farnesyl diphosphate biosynthetic process, mevalonate pathway"/>
    <property type="evidence" value="ECO:0007669"/>
    <property type="project" value="TreeGrafter"/>
</dbReference>
<dbReference type="GO" id="GO:0019287">
    <property type="term" value="P:isopentenyl diphosphate biosynthetic process, mevalonate pathway"/>
    <property type="evidence" value="ECO:0007669"/>
    <property type="project" value="UniProtKB-UniRule"/>
</dbReference>
<dbReference type="CDD" id="cd00827">
    <property type="entry name" value="init_cond_enzymes"/>
    <property type="match status" value="1"/>
</dbReference>
<dbReference type="FunFam" id="3.40.47.10:FF:000046">
    <property type="entry name" value="UPF0219 protein M1627_1703"/>
    <property type="match status" value="1"/>
</dbReference>
<dbReference type="Gene3D" id="3.40.47.10">
    <property type="match status" value="1"/>
</dbReference>
<dbReference type="HAMAP" id="MF_01409">
    <property type="entry name" value="HMG_CoA_synth_arch"/>
    <property type="match status" value="1"/>
</dbReference>
<dbReference type="InterPro" id="IPR013747">
    <property type="entry name" value="ACP_syn_III_C"/>
</dbReference>
<dbReference type="InterPro" id="IPR004656">
    <property type="entry name" value="HMG_CoA_Synthase"/>
</dbReference>
<dbReference type="InterPro" id="IPR016039">
    <property type="entry name" value="Thiolase-like"/>
</dbReference>
<dbReference type="NCBIfam" id="TIGR00748">
    <property type="entry name" value="HMG_CoA_syn_Arc"/>
    <property type="match status" value="1"/>
</dbReference>
<dbReference type="NCBIfam" id="NF003274">
    <property type="entry name" value="PRK04262.1"/>
    <property type="match status" value="1"/>
</dbReference>
<dbReference type="PANTHER" id="PTHR43323">
    <property type="entry name" value="3-HYDROXY-3-METHYLGLUTARYL COENZYME A SYNTHASE"/>
    <property type="match status" value="1"/>
</dbReference>
<dbReference type="PANTHER" id="PTHR43323:SF2">
    <property type="entry name" value="HYDROXYMETHYLGLUTARYL-COA SYNTHASE"/>
    <property type="match status" value="1"/>
</dbReference>
<dbReference type="Pfam" id="PF08541">
    <property type="entry name" value="ACP_syn_III_C"/>
    <property type="match status" value="1"/>
</dbReference>
<dbReference type="SUPFAM" id="SSF53901">
    <property type="entry name" value="Thiolase-like"/>
    <property type="match status" value="2"/>
</dbReference>
<sequence length="350" mass="38271">MRRLLKPIKDVGIVGYGAYVPMFRIKNEEIGRVWGVNGFPIQEKSVNNLDEDAITIGIEAARNALKRARINPREIRALWFGTESKPYAVKPSATVIAEAIGATPDLDAADFEFACKAGTEALQAAIGFVGSGMAKYAMAIGADTSQGRPGDHLEFTASAGGAAYIVGEKTSDTLAYFEGSYSYVTDTPDFWRRQHEHYPRHGNRFTGEPAYFHQIISAAKGLMEELDYSPSDFDFAVFHQPNVKFPLTVAKILGIPKEKVLPGLLSGIIGNTYSGATLVGISAVLDIAKPGDRILWVSFGSGAGSDAFSLIVQDAIEEKRELAPKTMDYVNRKKYLDYALYAKHRGKYIL</sequence>
<organism>
    <name type="scientific">Thermococcus sibiricus (strain DSM 12597 / MM 739)</name>
    <dbReference type="NCBI Taxonomy" id="604354"/>
    <lineage>
        <taxon>Archaea</taxon>
        <taxon>Methanobacteriati</taxon>
        <taxon>Methanobacteriota</taxon>
        <taxon>Thermococci</taxon>
        <taxon>Thermococcales</taxon>
        <taxon>Thermococcaceae</taxon>
        <taxon>Thermococcus</taxon>
    </lineage>
</organism>
<name>HMGCS_THESM</name>
<evidence type="ECO:0000255" key="1">
    <source>
        <dbReference type="HAMAP-Rule" id="MF_01409"/>
    </source>
</evidence>
<gene>
    <name type="ordered locus">TSIB_0799</name>
</gene>